<protein>
    <recommendedName>
        <fullName evidence="1">4-diphosphocytidyl-2-C-methyl-D-erythritol kinase</fullName>
        <shortName evidence="1">CMK</shortName>
        <ecNumber evidence="1">2.7.1.148</ecNumber>
    </recommendedName>
    <alternativeName>
        <fullName evidence="1">4-(cytidine-5'-diphospho)-2-C-methyl-D-erythritol kinase</fullName>
    </alternativeName>
</protein>
<organism>
    <name type="scientific">Bacteroides fragilis (strain YCH46)</name>
    <dbReference type="NCBI Taxonomy" id="295405"/>
    <lineage>
        <taxon>Bacteria</taxon>
        <taxon>Pseudomonadati</taxon>
        <taxon>Bacteroidota</taxon>
        <taxon>Bacteroidia</taxon>
        <taxon>Bacteroidales</taxon>
        <taxon>Bacteroidaceae</taxon>
        <taxon>Bacteroides</taxon>
    </lineage>
</organism>
<accession>Q64T40</accession>
<feature type="chain" id="PRO_0000235066" description="4-diphosphocytidyl-2-C-methyl-D-erythritol kinase">
    <location>
        <begin position="1"/>
        <end position="274"/>
    </location>
</feature>
<feature type="active site" evidence="1">
    <location>
        <position position="8"/>
    </location>
</feature>
<feature type="active site" evidence="1">
    <location>
        <position position="136"/>
    </location>
</feature>
<feature type="binding site" evidence="1">
    <location>
        <begin position="94"/>
        <end position="104"/>
    </location>
    <ligand>
        <name>ATP</name>
        <dbReference type="ChEBI" id="CHEBI:30616"/>
    </ligand>
</feature>
<comment type="function">
    <text evidence="1">Catalyzes the phosphorylation of the position 2 hydroxy group of 4-diphosphocytidyl-2C-methyl-D-erythritol.</text>
</comment>
<comment type="catalytic activity">
    <reaction evidence="1">
        <text>4-CDP-2-C-methyl-D-erythritol + ATP = 4-CDP-2-C-methyl-D-erythritol 2-phosphate + ADP + H(+)</text>
        <dbReference type="Rhea" id="RHEA:18437"/>
        <dbReference type="ChEBI" id="CHEBI:15378"/>
        <dbReference type="ChEBI" id="CHEBI:30616"/>
        <dbReference type="ChEBI" id="CHEBI:57823"/>
        <dbReference type="ChEBI" id="CHEBI:57919"/>
        <dbReference type="ChEBI" id="CHEBI:456216"/>
        <dbReference type="EC" id="2.7.1.148"/>
    </reaction>
</comment>
<comment type="pathway">
    <text evidence="1">Isoprenoid biosynthesis; isopentenyl diphosphate biosynthesis via DXP pathway; isopentenyl diphosphate from 1-deoxy-D-xylulose 5-phosphate: step 3/6.</text>
</comment>
<comment type="similarity">
    <text evidence="1">Belongs to the GHMP kinase family. IspE subfamily.</text>
</comment>
<gene>
    <name evidence="1" type="primary">ispE</name>
    <name type="ordered locus">BF2589</name>
</gene>
<dbReference type="EC" id="2.7.1.148" evidence="1"/>
<dbReference type="EMBL" id="AP006841">
    <property type="protein sequence ID" value="BAD49339.1"/>
    <property type="molecule type" value="Genomic_DNA"/>
</dbReference>
<dbReference type="RefSeq" id="WP_005793430.1">
    <property type="nucleotide sequence ID" value="NC_006347.1"/>
</dbReference>
<dbReference type="RefSeq" id="YP_099873.1">
    <property type="nucleotide sequence ID" value="NC_006347.1"/>
</dbReference>
<dbReference type="SMR" id="Q64T40"/>
<dbReference type="STRING" id="295405.BF2589"/>
<dbReference type="KEGG" id="bfr:BF2589"/>
<dbReference type="PATRIC" id="fig|295405.11.peg.2499"/>
<dbReference type="HOGENOM" id="CLU_053057_1_1_10"/>
<dbReference type="OrthoDB" id="9809438at2"/>
<dbReference type="UniPathway" id="UPA00056">
    <property type="reaction ID" value="UER00094"/>
</dbReference>
<dbReference type="Proteomes" id="UP000002197">
    <property type="component" value="Chromosome"/>
</dbReference>
<dbReference type="GO" id="GO:0050515">
    <property type="term" value="F:4-(cytidine 5'-diphospho)-2-C-methyl-D-erythritol kinase activity"/>
    <property type="evidence" value="ECO:0007669"/>
    <property type="project" value="UniProtKB-UniRule"/>
</dbReference>
<dbReference type="GO" id="GO:0005524">
    <property type="term" value="F:ATP binding"/>
    <property type="evidence" value="ECO:0007669"/>
    <property type="project" value="UniProtKB-UniRule"/>
</dbReference>
<dbReference type="GO" id="GO:0019288">
    <property type="term" value="P:isopentenyl diphosphate biosynthetic process, methylerythritol 4-phosphate pathway"/>
    <property type="evidence" value="ECO:0007669"/>
    <property type="project" value="UniProtKB-UniRule"/>
</dbReference>
<dbReference type="GO" id="GO:0016114">
    <property type="term" value="P:terpenoid biosynthetic process"/>
    <property type="evidence" value="ECO:0007669"/>
    <property type="project" value="InterPro"/>
</dbReference>
<dbReference type="Gene3D" id="3.30.230.10">
    <property type="match status" value="1"/>
</dbReference>
<dbReference type="Gene3D" id="3.30.70.890">
    <property type="entry name" value="GHMP kinase, C-terminal domain"/>
    <property type="match status" value="1"/>
</dbReference>
<dbReference type="HAMAP" id="MF_00061">
    <property type="entry name" value="IspE"/>
    <property type="match status" value="1"/>
</dbReference>
<dbReference type="InterPro" id="IPR013750">
    <property type="entry name" value="GHMP_kinase_C_dom"/>
</dbReference>
<dbReference type="InterPro" id="IPR036554">
    <property type="entry name" value="GHMP_kinase_C_sf"/>
</dbReference>
<dbReference type="InterPro" id="IPR006204">
    <property type="entry name" value="GHMP_kinase_N_dom"/>
</dbReference>
<dbReference type="InterPro" id="IPR004424">
    <property type="entry name" value="IspE"/>
</dbReference>
<dbReference type="InterPro" id="IPR020568">
    <property type="entry name" value="Ribosomal_Su5_D2-typ_SF"/>
</dbReference>
<dbReference type="InterPro" id="IPR014721">
    <property type="entry name" value="Ribsml_uS5_D2-typ_fold_subgr"/>
</dbReference>
<dbReference type="NCBIfam" id="TIGR00154">
    <property type="entry name" value="ispE"/>
    <property type="match status" value="1"/>
</dbReference>
<dbReference type="PANTHER" id="PTHR43527">
    <property type="entry name" value="4-DIPHOSPHOCYTIDYL-2-C-METHYL-D-ERYTHRITOL KINASE, CHLOROPLASTIC"/>
    <property type="match status" value="1"/>
</dbReference>
<dbReference type="PANTHER" id="PTHR43527:SF2">
    <property type="entry name" value="4-DIPHOSPHOCYTIDYL-2-C-METHYL-D-ERYTHRITOL KINASE, CHLOROPLASTIC"/>
    <property type="match status" value="1"/>
</dbReference>
<dbReference type="Pfam" id="PF08544">
    <property type="entry name" value="GHMP_kinases_C"/>
    <property type="match status" value="1"/>
</dbReference>
<dbReference type="Pfam" id="PF00288">
    <property type="entry name" value="GHMP_kinases_N"/>
    <property type="match status" value="1"/>
</dbReference>
<dbReference type="PIRSF" id="PIRSF010376">
    <property type="entry name" value="IspE"/>
    <property type="match status" value="1"/>
</dbReference>
<dbReference type="SUPFAM" id="SSF55060">
    <property type="entry name" value="GHMP Kinase, C-terminal domain"/>
    <property type="match status" value="1"/>
</dbReference>
<dbReference type="SUPFAM" id="SSF54211">
    <property type="entry name" value="Ribosomal protein S5 domain 2-like"/>
    <property type="match status" value="1"/>
</dbReference>
<proteinExistence type="inferred from homology"/>
<reference key="1">
    <citation type="journal article" date="2004" name="Proc. Natl. Acad. Sci. U.S.A.">
        <title>Genomic analysis of Bacteroides fragilis reveals extensive DNA inversions regulating cell surface adaptation.</title>
        <authorList>
            <person name="Kuwahara T."/>
            <person name="Yamashita A."/>
            <person name="Hirakawa H."/>
            <person name="Nakayama H."/>
            <person name="Toh H."/>
            <person name="Okada N."/>
            <person name="Kuhara S."/>
            <person name="Hattori M."/>
            <person name="Hayashi T."/>
            <person name="Ohnishi Y."/>
        </authorList>
    </citation>
    <scope>NUCLEOTIDE SEQUENCE [LARGE SCALE GENOMIC DNA]</scope>
    <source>
        <strain>YCH46</strain>
    </source>
</reference>
<name>ISPE_BACFR</name>
<keyword id="KW-0067">ATP-binding</keyword>
<keyword id="KW-0414">Isoprene biosynthesis</keyword>
<keyword id="KW-0418">Kinase</keyword>
<keyword id="KW-0547">Nucleotide-binding</keyword>
<keyword id="KW-0808">Transferase</keyword>
<sequence length="274" mass="30787">MITFPNAKINLGLNITEKRPDGYHNLETVFYPIPLEDALEITILNDSKQKFVLHQSGLEISGEPETNLVVKAYLLLEQEFQLPPVDIYLYKHIPSGAGLGGGSADAAFMLKLLNEKFNLHLADEKLEEYAAILGADCAFFIKNKPTFAEGIGNIFSPVDLSLKGYQLVLVKPDVFVSTRDAFSQIQPHYPDHSLKEIIRRPVSEWKNCMFNDFEKSVFPQYPVIEEIKKELYSKGAIYAAMSGSGSSVFGLFSPEEKITKMDFEAAFCFQTELK</sequence>
<evidence type="ECO:0000255" key="1">
    <source>
        <dbReference type="HAMAP-Rule" id="MF_00061"/>
    </source>
</evidence>